<sequence length="1499" mass="167688">MEREPAGTEEPGPPGRRRRREGRTRTVRSNLLPPPGAEDPAAGAAKGERRRRRGCAQHLADNRLKTTKYTLLSFLPKNLFEQFHRPANVYFVFIALLNFVPAVNAFQPGLALAPVLFILAITAFRDLWEDYSRHRSDHKINHLGCLVFSREEKKYVNRFWKEIHVGDFVRLRCNEIFPADILLLSSSDPDGLCHIETANLDGETNLKRRQVVRGFSELVSEFNPLTFTSVIECEKPNNDLSRFRGCIIHDNGKKAGLYKENLLLRGCTLRNTDAVVGIVIYAGHETKALLNNSGPRYKRSKLERQMNCDVLWCVLLLVCMSLFSAVGHGLWIWRYQEKKSLFYVPKSDGSSLSPVTAAVYSFLTMIIVLQVLIPISLYVSIEIVKACQVYFINQDMQLYDEETDSQLQCRALNITEDLGQIQYIFSDKTGTLTENKMVFRRCTVSGVEYSHDANAQRLARYQEADSEEEEVVPRGGSVSQRGSIGSHQSVRVVHRTQSTKSHRRTGSRAEAKRASMLSKHTAFSSPMEKDITPDPKLLEKVSECDKSLAVARHQEHLLAHLSPELSDVFDFFIALTICNTVVVTSPDQPRTKVRVRFELKSPVKTIEDFLRRFTPSCLTSGCSSIGSLAANKSSHKLGSSFPSTPSSDGMLLRLEERLGQPTSAIASNGYSSQADNWASELAQEQESERELRYEAESPDEAALVYAARAYNCVLVERLHDQVSVELPHLGRLTFELLHTLGFDSVRKRMSVVIRHPLTDEINVYTKGADSVVMDLLQPCSSVDARGRHQKKIRSKTQNYLNVYAAEGLRTLCIAKRVLSKEEYACWLQSHLEAESSLENSEELLFQSAIRLETNLHLLGATGIEDRLQDGVPETISKLRQAGLQIWVLTGDKQETAVNIAYACKLLDHDEEVITLNATSQEACAALLDQCLCYVQSRGLQRAPEKTKGKVSMRFSSLCPPSTSTASGRRPSLVIDGRSLAYALEKNLEDKFLFLAKQCRSVLCCRSTPLQKSMVVKLVRSKLKAMTLAIGDGANDVSMIQVADVGVGISGQEGMQAVMASDFAVPKFRYLERLLILHGHWCYSRLANMVLYFFYKNTMFVGLLFWFQFFCGFSASTMIDQWYLIFFNLLFSSLPPLVTGVLDRDVPANVLLTNPQLYKSGQNMEEYRPRTFWFNMADAAFQSLVCFSIPYLAYYDSNVDLFTWGTPIVTIALLTFLLHLGIETKTWTWLNWITCGFSVLLFFTVALIYNASCATCYPPSNPYWTMQALLGDPVFYLTCLMTPVAALLPRLFFRSLQGRVFPTQLQLARQLTRKSPRRCSAPKETFAQGRLPKDSGTEHSSGRTVKTSVPLSQPSWHTQQPVCSLEASGEPSTVDMSMPVREHTLLEGLSAPAPMSSAPGEAVLRSPGGCPEESKVRAASTGRVTPLSSLFSLPTFSLLNWISSWSLVSRLGSVLQFSRTEQLADGQAGRGLPVQPHSGRSGLQGPDHRLLIGASSRRSQ</sequence>
<dbReference type="EC" id="7.6.2.1" evidence="10 12"/>
<dbReference type="EMBL" id="AB051358">
    <property type="protein sequence ID" value="BAB47392.1"/>
    <property type="molecule type" value="mRNA"/>
</dbReference>
<dbReference type="EMBL" id="AY029504">
    <property type="protein sequence ID" value="AAK33100.1"/>
    <property type="molecule type" value="Genomic_DNA"/>
</dbReference>
<dbReference type="EMBL" id="AY029487">
    <property type="protein sequence ID" value="AAK33100.1"/>
    <property type="status" value="JOINED"/>
    <property type="molecule type" value="Genomic_DNA"/>
</dbReference>
<dbReference type="EMBL" id="AY029488">
    <property type="protein sequence ID" value="AAK33100.1"/>
    <property type="status" value="JOINED"/>
    <property type="molecule type" value="Genomic_DNA"/>
</dbReference>
<dbReference type="EMBL" id="AY029489">
    <property type="protein sequence ID" value="AAK33100.1"/>
    <property type="status" value="JOINED"/>
    <property type="molecule type" value="Genomic_DNA"/>
</dbReference>
<dbReference type="EMBL" id="AY029490">
    <property type="protein sequence ID" value="AAK33100.1"/>
    <property type="status" value="JOINED"/>
    <property type="molecule type" value="Genomic_DNA"/>
</dbReference>
<dbReference type="EMBL" id="AY029491">
    <property type="protein sequence ID" value="AAK33100.1"/>
    <property type="status" value="JOINED"/>
    <property type="molecule type" value="Genomic_DNA"/>
</dbReference>
<dbReference type="EMBL" id="AY029492">
    <property type="protein sequence ID" value="AAK33100.1"/>
    <property type="status" value="JOINED"/>
    <property type="molecule type" value="Genomic_DNA"/>
</dbReference>
<dbReference type="EMBL" id="AY029493">
    <property type="protein sequence ID" value="AAK33100.1"/>
    <property type="status" value="JOINED"/>
    <property type="molecule type" value="Genomic_DNA"/>
</dbReference>
<dbReference type="EMBL" id="AY029494">
    <property type="protein sequence ID" value="AAK33100.1"/>
    <property type="status" value="JOINED"/>
    <property type="molecule type" value="Genomic_DNA"/>
</dbReference>
<dbReference type="EMBL" id="AY029495">
    <property type="protein sequence ID" value="AAK33100.1"/>
    <property type="status" value="JOINED"/>
    <property type="molecule type" value="Genomic_DNA"/>
</dbReference>
<dbReference type="EMBL" id="AY029496">
    <property type="protein sequence ID" value="AAK33100.1"/>
    <property type="status" value="JOINED"/>
    <property type="molecule type" value="Genomic_DNA"/>
</dbReference>
<dbReference type="EMBL" id="AY029497">
    <property type="protein sequence ID" value="AAK33100.1"/>
    <property type="status" value="JOINED"/>
    <property type="molecule type" value="Genomic_DNA"/>
</dbReference>
<dbReference type="EMBL" id="AY029498">
    <property type="protein sequence ID" value="AAK33100.1"/>
    <property type="status" value="JOINED"/>
    <property type="molecule type" value="Genomic_DNA"/>
</dbReference>
<dbReference type="EMBL" id="AY029499">
    <property type="protein sequence ID" value="AAK33100.1"/>
    <property type="status" value="JOINED"/>
    <property type="molecule type" value="Genomic_DNA"/>
</dbReference>
<dbReference type="EMBL" id="AY029500">
    <property type="protein sequence ID" value="AAK33100.1"/>
    <property type="status" value="JOINED"/>
    <property type="molecule type" value="Genomic_DNA"/>
</dbReference>
<dbReference type="EMBL" id="AY029501">
    <property type="protein sequence ID" value="AAK33100.1"/>
    <property type="status" value="JOINED"/>
    <property type="molecule type" value="Genomic_DNA"/>
</dbReference>
<dbReference type="EMBL" id="AY029502">
    <property type="protein sequence ID" value="AAK33100.1"/>
    <property type="status" value="JOINED"/>
    <property type="molecule type" value="Genomic_DNA"/>
</dbReference>
<dbReference type="EMBL" id="AY029503">
    <property type="protein sequence ID" value="AAK33100.1"/>
    <property type="status" value="JOINED"/>
    <property type="molecule type" value="Genomic_DNA"/>
</dbReference>
<dbReference type="EMBL" id="AC016266">
    <property type="status" value="NOT_ANNOTATED_CDS"/>
    <property type="molecule type" value="Genomic_DNA"/>
</dbReference>
<dbReference type="EMBL" id="AC023449">
    <property type="status" value="NOT_ANNOTATED_CDS"/>
    <property type="molecule type" value="Genomic_DNA"/>
</dbReference>
<dbReference type="EMBL" id="AC109512">
    <property type="status" value="NOT_ANNOTATED_CDS"/>
    <property type="molecule type" value="Genomic_DNA"/>
</dbReference>
<dbReference type="EMBL" id="BC052251">
    <property type="protein sequence ID" value="AAH52251.1"/>
    <property type="molecule type" value="mRNA"/>
</dbReference>
<dbReference type="EMBL" id="BC038712">
    <property type="protein sequence ID" value="AAH38712.1"/>
    <property type="molecule type" value="mRNA"/>
</dbReference>
<dbReference type="EMBL" id="AB011138">
    <property type="protein sequence ID" value="BAA25492.1"/>
    <property type="molecule type" value="mRNA"/>
</dbReference>
<dbReference type="CCDS" id="CCDS32178.1">
    <molecule id="O60312-1"/>
</dbReference>
<dbReference type="RefSeq" id="NP_077816.1">
    <molecule id="O60312-1"/>
    <property type="nucleotide sequence ID" value="NM_024490.4"/>
</dbReference>
<dbReference type="RefSeq" id="XP_005268318.1">
    <molecule id="O60312-1"/>
    <property type="nucleotide sequence ID" value="XM_005268261.5"/>
</dbReference>
<dbReference type="RefSeq" id="XP_011520128.1">
    <molecule id="O60312-1"/>
    <property type="nucleotide sequence ID" value="XM_011521826.3"/>
</dbReference>
<dbReference type="RefSeq" id="XP_054234475.1">
    <molecule id="O60312-1"/>
    <property type="nucleotide sequence ID" value="XM_054378500.1"/>
</dbReference>
<dbReference type="RefSeq" id="XP_054234476.1">
    <molecule id="O60312-1"/>
    <property type="nucleotide sequence ID" value="XM_054378501.1"/>
</dbReference>
<dbReference type="SMR" id="O60312"/>
<dbReference type="BioGRID" id="121443">
    <property type="interactions" value="9"/>
</dbReference>
<dbReference type="ComplexPortal" id="CPX-6307">
    <property type="entry name" value="ATP10A-CDC50A P4-ATPase complex"/>
</dbReference>
<dbReference type="FunCoup" id="O60312">
    <property type="interactions" value="312"/>
</dbReference>
<dbReference type="IntAct" id="O60312">
    <property type="interactions" value="3"/>
</dbReference>
<dbReference type="MINT" id="O60312"/>
<dbReference type="STRING" id="9606.ENSP00000450480"/>
<dbReference type="TCDB" id="3.A.3.8.26">
    <property type="family name" value="the p-type atpase (p-atpase) superfamily"/>
</dbReference>
<dbReference type="GlyGen" id="O60312">
    <property type="glycosylation" value="1 site"/>
</dbReference>
<dbReference type="iPTMnet" id="O60312"/>
<dbReference type="PhosphoSitePlus" id="O60312"/>
<dbReference type="BioMuta" id="ATP10A"/>
<dbReference type="jPOST" id="O60312"/>
<dbReference type="MassIVE" id="O60312"/>
<dbReference type="PaxDb" id="9606-ENSP00000349325"/>
<dbReference type="PeptideAtlas" id="O60312"/>
<dbReference type="ProteomicsDB" id="49339">
    <molecule id="O60312-1"/>
</dbReference>
<dbReference type="ProteomicsDB" id="62126"/>
<dbReference type="Antibodypedia" id="58541">
    <property type="antibodies" value="25 antibodies from 13 providers"/>
</dbReference>
<dbReference type="DNASU" id="57194"/>
<dbReference type="Ensembl" id="ENST00000356865.11">
    <molecule id="O60312-1"/>
    <property type="protein sequence ID" value="ENSP00000349325.6"/>
    <property type="gene ID" value="ENSG00000206190.13"/>
</dbReference>
<dbReference type="Ensembl" id="ENST00000389967.9">
    <molecule id="O60312-2"/>
    <property type="protein sequence ID" value="ENSP00000374617.4"/>
    <property type="gene ID" value="ENSG00000206190.13"/>
</dbReference>
<dbReference type="Ensembl" id="ENST00000555815.7">
    <molecule id="O60312-1"/>
    <property type="protein sequence ID" value="ENSP00000450480.2"/>
    <property type="gene ID" value="ENSG00000206190.13"/>
</dbReference>
<dbReference type="Ensembl" id="ENST00000619904.1">
    <molecule id="O60312-2"/>
    <property type="protein sequence ID" value="ENSP00000480665.1"/>
    <property type="gene ID" value="ENSG00000206190.13"/>
</dbReference>
<dbReference type="GeneID" id="57194"/>
<dbReference type="KEGG" id="hsa:57194"/>
<dbReference type="MANE-Select" id="ENST00000555815.7">
    <property type="protein sequence ID" value="ENSP00000450480.2"/>
    <property type="RefSeq nucleotide sequence ID" value="NM_024490.4"/>
    <property type="RefSeq protein sequence ID" value="NP_077816.1"/>
</dbReference>
<dbReference type="UCSC" id="uc001zax.4">
    <molecule id="O60312-1"/>
    <property type="organism name" value="human"/>
</dbReference>
<dbReference type="AGR" id="HGNC:13542"/>
<dbReference type="CTD" id="57194"/>
<dbReference type="DisGeNET" id="57194"/>
<dbReference type="GeneCards" id="ATP10A"/>
<dbReference type="GeneReviews" id="ATP10A"/>
<dbReference type="HGNC" id="HGNC:13542">
    <property type="gene designation" value="ATP10A"/>
</dbReference>
<dbReference type="HPA" id="ENSG00000206190">
    <property type="expression patterns" value="Low tissue specificity"/>
</dbReference>
<dbReference type="MalaCards" id="ATP10A"/>
<dbReference type="MIM" id="605855">
    <property type="type" value="gene"/>
</dbReference>
<dbReference type="neXtProt" id="NX_O60312"/>
<dbReference type="OpenTargets" id="ENSG00000206190"/>
<dbReference type="Orphanet" id="411515">
    <property type="disease" value="Angelman syndrome due to imprinting defect in 15q11-q13"/>
</dbReference>
<dbReference type="PharmGKB" id="PA25097"/>
<dbReference type="VEuPathDB" id="HostDB:ENSG00000206190"/>
<dbReference type="eggNOG" id="KOG0206">
    <property type="taxonomic scope" value="Eukaryota"/>
</dbReference>
<dbReference type="GeneTree" id="ENSGT00940000157895"/>
<dbReference type="HOGENOM" id="CLU_000846_3_4_1"/>
<dbReference type="InParanoid" id="O60312"/>
<dbReference type="OMA" id="QALRCGR"/>
<dbReference type="OrthoDB" id="377733at2759"/>
<dbReference type="PAN-GO" id="O60312">
    <property type="GO annotations" value="3 GO annotations based on evolutionary models"/>
</dbReference>
<dbReference type="PhylomeDB" id="O60312"/>
<dbReference type="TreeFam" id="TF354252"/>
<dbReference type="BRENDA" id="7.6.2.1">
    <property type="organism ID" value="2681"/>
</dbReference>
<dbReference type="PathwayCommons" id="O60312"/>
<dbReference type="Reactome" id="R-HSA-936837">
    <property type="pathway name" value="Ion transport by P-type ATPases"/>
</dbReference>
<dbReference type="SignaLink" id="O60312"/>
<dbReference type="BioGRID-ORCS" id="57194">
    <property type="hits" value="23 hits in 1149 CRISPR screens"/>
</dbReference>
<dbReference type="ChiTaRS" id="ATP10A">
    <property type="organism name" value="human"/>
</dbReference>
<dbReference type="GeneWiki" id="ATP10A"/>
<dbReference type="GenomeRNAi" id="57194"/>
<dbReference type="Pharos" id="O60312">
    <property type="development level" value="Tbio"/>
</dbReference>
<dbReference type="PRO" id="PR:O60312"/>
<dbReference type="Proteomes" id="UP000005640">
    <property type="component" value="Chromosome 15"/>
</dbReference>
<dbReference type="RNAct" id="O60312">
    <property type="molecule type" value="protein"/>
</dbReference>
<dbReference type="Bgee" id="ENSG00000206190">
    <property type="expression patterns" value="Expressed in endothelial cell and 162 other cell types or tissues"/>
</dbReference>
<dbReference type="ExpressionAtlas" id="O60312">
    <property type="expression patterns" value="baseline and differential"/>
</dbReference>
<dbReference type="GO" id="GO:0005783">
    <property type="term" value="C:endoplasmic reticulum"/>
    <property type="evidence" value="ECO:0000314"/>
    <property type="project" value="UniProtKB"/>
</dbReference>
<dbReference type="GO" id="GO:0005789">
    <property type="term" value="C:endoplasmic reticulum membrane"/>
    <property type="evidence" value="ECO:0007669"/>
    <property type="project" value="UniProtKB-SubCell"/>
</dbReference>
<dbReference type="GO" id="GO:0016020">
    <property type="term" value="C:membrane"/>
    <property type="evidence" value="ECO:0000303"/>
    <property type="project" value="UniProtKB"/>
</dbReference>
<dbReference type="GO" id="GO:1990531">
    <property type="term" value="C:phospholipid-translocating ATPase complex"/>
    <property type="evidence" value="ECO:0000314"/>
    <property type="project" value="UniProtKB"/>
</dbReference>
<dbReference type="GO" id="GO:0005886">
    <property type="term" value="C:plasma membrane"/>
    <property type="evidence" value="ECO:0000314"/>
    <property type="project" value="UniProtKB"/>
</dbReference>
<dbReference type="GO" id="GO:0005524">
    <property type="term" value="F:ATP binding"/>
    <property type="evidence" value="ECO:0007669"/>
    <property type="project" value="UniProtKB-KW"/>
</dbReference>
<dbReference type="GO" id="GO:0016887">
    <property type="term" value="F:ATP hydrolysis activity"/>
    <property type="evidence" value="ECO:0007669"/>
    <property type="project" value="InterPro"/>
</dbReference>
<dbReference type="GO" id="GO:0140326">
    <property type="term" value="F:ATPase-coupled intramembrane lipid transporter activity"/>
    <property type="evidence" value="ECO:0000318"/>
    <property type="project" value="GO_Central"/>
</dbReference>
<dbReference type="GO" id="GO:0140351">
    <property type="term" value="F:glycosylceramide flippase activity"/>
    <property type="evidence" value="ECO:0000314"/>
    <property type="project" value="UniProtKB"/>
</dbReference>
<dbReference type="GO" id="GO:0000287">
    <property type="term" value="F:magnesium ion binding"/>
    <property type="evidence" value="ECO:0007669"/>
    <property type="project" value="InterPro"/>
</dbReference>
<dbReference type="GO" id="GO:0140345">
    <property type="term" value="F:phosphatidylcholine flippase activity"/>
    <property type="evidence" value="ECO:0000314"/>
    <property type="project" value="UniProtKB"/>
</dbReference>
<dbReference type="GO" id="GO:0090554">
    <property type="term" value="F:phosphatidylcholine floppase activity"/>
    <property type="evidence" value="ECO:0007669"/>
    <property type="project" value="RHEA"/>
</dbReference>
<dbReference type="GO" id="GO:0034220">
    <property type="term" value="P:monoatomic ion transmembrane transport"/>
    <property type="evidence" value="ECO:0000304"/>
    <property type="project" value="Reactome"/>
</dbReference>
<dbReference type="GO" id="GO:0045332">
    <property type="term" value="P:phospholipid translocation"/>
    <property type="evidence" value="ECO:0000318"/>
    <property type="project" value="GO_Central"/>
</dbReference>
<dbReference type="GO" id="GO:1903527">
    <property type="term" value="P:positive regulation of membrane tubulation"/>
    <property type="evidence" value="ECO:0000314"/>
    <property type="project" value="UniProtKB"/>
</dbReference>
<dbReference type="GO" id="GO:0008360">
    <property type="term" value="P:regulation of cell shape"/>
    <property type="evidence" value="ECO:0000303"/>
    <property type="project" value="UniProtKB"/>
</dbReference>
<dbReference type="CDD" id="cd02073">
    <property type="entry name" value="P-type_ATPase_APLT_Dnf-like"/>
    <property type="match status" value="1"/>
</dbReference>
<dbReference type="FunFam" id="2.70.150.10:FF:000022">
    <property type="entry name" value="Phospholipid-transporting ATPase"/>
    <property type="match status" value="1"/>
</dbReference>
<dbReference type="FunFam" id="3.40.1110.10:FF:000009">
    <property type="entry name" value="Phospholipid-transporting ATPase"/>
    <property type="match status" value="1"/>
</dbReference>
<dbReference type="FunFam" id="3.40.1110.10:FF:000109">
    <property type="entry name" value="Phospholipid-transporting ATPase"/>
    <property type="match status" value="1"/>
</dbReference>
<dbReference type="FunFam" id="3.40.50.1000:FF:000110">
    <property type="entry name" value="Phospholipid-transporting ATPase"/>
    <property type="match status" value="1"/>
</dbReference>
<dbReference type="FunFam" id="3.40.50.1000:FF:000001">
    <property type="entry name" value="Phospholipid-transporting ATPase IC"/>
    <property type="match status" value="1"/>
</dbReference>
<dbReference type="Gene3D" id="3.40.1110.10">
    <property type="entry name" value="Calcium-transporting ATPase, cytoplasmic domain N"/>
    <property type="match status" value="2"/>
</dbReference>
<dbReference type="Gene3D" id="2.70.150.10">
    <property type="entry name" value="Calcium-transporting ATPase, cytoplasmic transduction domain A"/>
    <property type="match status" value="1"/>
</dbReference>
<dbReference type="Gene3D" id="1.20.1110.10">
    <property type="entry name" value="Calcium-transporting ATPase, transmembrane domain"/>
    <property type="match status" value="1"/>
</dbReference>
<dbReference type="Gene3D" id="3.40.50.1000">
    <property type="entry name" value="HAD superfamily/HAD-like"/>
    <property type="match status" value="2"/>
</dbReference>
<dbReference type="InterPro" id="IPR023299">
    <property type="entry name" value="ATPase_P-typ_cyto_dom_N"/>
</dbReference>
<dbReference type="InterPro" id="IPR018303">
    <property type="entry name" value="ATPase_P-typ_P_site"/>
</dbReference>
<dbReference type="InterPro" id="IPR023298">
    <property type="entry name" value="ATPase_P-typ_TM_dom_sf"/>
</dbReference>
<dbReference type="InterPro" id="IPR008250">
    <property type="entry name" value="ATPase_P-typ_transduc_dom_A_sf"/>
</dbReference>
<dbReference type="InterPro" id="IPR036412">
    <property type="entry name" value="HAD-like_sf"/>
</dbReference>
<dbReference type="InterPro" id="IPR023214">
    <property type="entry name" value="HAD_sf"/>
</dbReference>
<dbReference type="InterPro" id="IPR006539">
    <property type="entry name" value="P-type_ATPase_IV"/>
</dbReference>
<dbReference type="InterPro" id="IPR032631">
    <property type="entry name" value="P-type_ATPase_N"/>
</dbReference>
<dbReference type="InterPro" id="IPR001757">
    <property type="entry name" value="P_typ_ATPase"/>
</dbReference>
<dbReference type="InterPro" id="IPR032630">
    <property type="entry name" value="P_typ_ATPase_c"/>
</dbReference>
<dbReference type="InterPro" id="IPR044492">
    <property type="entry name" value="P_typ_ATPase_HD_dom"/>
</dbReference>
<dbReference type="NCBIfam" id="TIGR01652">
    <property type="entry name" value="ATPase-Plipid"/>
    <property type="match status" value="2"/>
</dbReference>
<dbReference type="NCBIfam" id="TIGR01494">
    <property type="entry name" value="ATPase_P-type"/>
    <property type="match status" value="2"/>
</dbReference>
<dbReference type="PANTHER" id="PTHR24092:SF81">
    <property type="entry name" value="PHOSPHOLIPID-TRANSPORTING ATPASE VA"/>
    <property type="match status" value="1"/>
</dbReference>
<dbReference type="PANTHER" id="PTHR24092">
    <property type="entry name" value="PROBABLE PHOSPHOLIPID-TRANSPORTING ATPASE"/>
    <property type="match status" value="1"/>
</dbReference>
<dbReference type="Pfam" id="PF13246">
    <property type="entry name" value="Cation_ATPase"/>
    <property type="match status" value="1"/>
</dbReference>
<dbReference type="Pfam" id="PF16212">
    <property type="entry name" value="PhoLip_ATPase_C"/>
    <property type="match status" value="1"/>
</dbReference>
<dbReference type="Pfam" id="PF16209">
    <property type="entry name" value="PhoLip_ATPase_N"/>
    <property type="match status" value="1"/>
</dbReference>
<dbReference type="PRINTS" id="PR00119">
    <property type="entry name" value="CATATPASE"/>
</dbReference>
<dbReference type="SFLD" id="SFLDG00002">
    <property type="entry name" value="C1.7:_P-type_atpase_like"/>
    <property type="match status" value="1"/>
</dbReference>
<dbReference type="SFLD" id="SFLDF00027">
    <property type="entry name" value="p-type_atpase"/>
    <property type="match status" value="1"/>
</dbReference>
<dbReference type="SUPFAM" id="SSF81653">
    <property type="entry name" value="Calcium ATPase, transduction domain A"/>
    <property type="match status" value="1"/>
</dbReference>
<dbReference type="SUPFAM" id="SSF81665">
    <property type="entry name" value="Calcium ATPase, transmembrane domain M"/>
    <property type="match status" value="1"/>
</dbReference>
<dbReference type="SUPFAM" id="SSF56784">
    <property type="entry name" value="HAD-like"/>
    <property type="match status" value="1"/>
</dbReference>
<dbReference type="SUPFAM" id="SSF81660">
    <property type="entry name" value="Metal cation-transporting ATPase, ATP-binding domain N"/>
    <property type="match status" value="1"/>
</dbReference>
<dbReference type="PROSITE" id="PS00154">
    <property type="entry name" value="ATPASE_E1_E2"/>
    <property type="match status" value="1"/>
</dbReference>
<accession>O60312</accession>
<accession>Q4G0S9</accession>
<accession>Q969I4</accession>
<feature type="chain" id="PRO_0000046379" description="Phospholipid-transporting ATPase VA">
    <location>
        <begin position="1"/>
        <end position="1499"/>
    </location>
</feature>
<feature type="topological domain" description="Cytoplasmic" evidence="7">
    <location>
        <begin position="1"/>
        <end position="86"/>
    </location>
</feature>
<feature type="transmembrane region" description="Helical" evidence="7">
    <location>
        <begin position="87"/>
        <end position="106"/>
    </location>
</feature>
<feature type="topological domain" description="Exoplasmic loop" evidence="7">
    <location>
        <begin position="107"/>
        <end position="110"/>
    </location>
</feature>
<feature type="transmembrane region" description="Helical" evidence="7">
    <location>
        <begin position="111"/>
        <end position="128"/>
    </location>
</feature>
<feature type="topological domain" description="Cytoplasmic" evidence="7">
    <location>
        <begin position="129"/>
        <end position="309"/>
    </location>
</feature>
<feature type="transmembrane region" description="Helical" evidence="7">
    <location>
        <begin position="310"/>
        <end position="332"/>
    </location>
</feature>
<feature type="topological domain" description="Exoplasmic loop" evidence="7">
    <location>
        <begin position="333"/>
        <end position="362"/>
    </location>
</feature>
<feature type="transmembrane region" description="Helical" evidence="7">
    <location>
        <begin position="363"/>
        <end position="384"/>
    </location>
</feature>
<feature type="topological domain" description="Cytoplasmic" evidence="7">
    <location>
        <begin position="385"/>
        <end position="1087"/>
    </location>
</feature>
<feature type="transmembrane region" description="Helical" evidence="7">
    <location>
        <begin position="1088"/>
        <end position="1108"/>
    </location>
</feature>
<feature type="topological domain" description="Exoplasmic loop" evidence="7">
    <location>
        <begin position="1109"/>
        <end position="1119"/>
    </location>
</feature>
<feature type="transmembrane region" description="Helical" evidence="7">
    <location>
        <begin position="1120"/>
        <end position="1140"/>
    </location>
</feature>
<feature type="topological domain" description="Cytoplasmic" evidence="7">
    <location>
        <begin position="1141"/>
        <end position="1170"/>
    </location>
</feature>
<feature type="transmembrane region" description="Helical" evidence="7">
    <location>
        <begin position="1171"/>
        <end position="1192"/>
    </location>
</feature>
<feature type="topological domain" description="Exoplasmic loop" evidence="7">
    <location>
        <begin position="1193"/>
        <end position="1199"/>
    </location>
</feature>
<feature type="transmembrane region" description="Helical" evidence="7">
    <location>
        <begin position="1200"/>
        <end position="1222"/>
    </location>
</feature>
<feature type="topological domain" description="Cytoplasmic" evidence="7">
    <location>
        <begin position="1223"/>
        <end position="1228"/>
    </location>
</feature>
<feature type="transmembrane region" description="Helical" evidence="7">
    <location>
        <begin position="1229"/>
        <end position="1249"/>
    </location>
</feature>
<feature type="topological domain" description="Exoplasmic loop" evidence="7">
    <location>
        <begin position="1250"/>
        <end position="1267"/>
    </location>
</feature>
<feature type="transmembrane region" description="Helical" evidence="7">
    <location>
        <begin position="1268"/>
        <end position="1292"/>
    </location>
</feature>
<feature type="topological domain" description="Cytoplasmic" evidence="7">
    <location>
        <begin position="1293"/>
        <end position="1499"/>
    </location>
</feature>
<feature type="region of interest" description="Disordered" evidence="8">
    <location>
        <begin position="1"/>
        <end position="53"/>
    </location>
</feature>
<feature type="region of interest" description="Disordered" evidence="8">
    <location>
        <begin position="464"/>
        <end position="531"/>
    </location>
</feature>
<feature type="region of interest" description="Disordered" evidence="8">
    <location>
        <begin position="1311"/>
        <end position="1356"/>
    </location>
</feature>
<feature type="region of interest" description="Disordered" evidence="8">
    <location>
        <begin position="1464"/>
        <end position="1499"/>
    </location>
</feature>
<feature type="compositionally biased region" description="Basic residues" evidence="8">
    <location>
        <begin position="15"/>
        <end position="26"/>
    </location>
</feature>
<feature type="compositionally biased region" description="Polar residues" evidence="8">
    <location>
        <begin position="477"/>
        <end position="499"/>
    </location>
</feature>
<feature type="compositionally biased region" description="Basic and acidic residues" evidence="8">
    <location>
        <begin position="1330"/>
        <end position="1340"/>
    </location>
</feature>
<feature type="compositionally biased region" description="Polar residues" evidence="8">
    <location>
        <begin position="1341"/>
        <end position="1356"/>
    </location>
</feature>
<feature type="active site" description="4-aspartylphosphate intermediate" evidence="5">
    <location>
        <position position="427"/>
    </location>
</feature>
<feature type="binding site" evidence="6">
    <location>
        <position position="427"/>
    </location>
    <ligand>
        <name>ATP</name>
        <dbReference type="ChEBI" id="CHEBI:30616"/>
    </ligand>
</feature>
<feature type="binding site" evidence="6">
    <location>
        <position position="427"/>
    </location>
    <ligand>
        <name>Mg(2+)</name>
        <dbReference type="ChEBI" id="CHEBI:18420"/>
    </ligand>
</feature>
<feature type="binding site" evidence="6">
    <location>
        <position position="428"/>
    </location>
    <ligand>
        <name>ATP</name>
        <dbReference type="ChEBI" id="CHEBI:30616"/>
    </ligand>
</feature>
<feature type="binding site" evidence="6">
    <location>
        <position position="429"/>
    </location>
    <ligand>
        <name>ATP</name>
        <dbReference type="ChEBI" id="CHEBI:30616"/>
    </ligand>
</feature>
<feature type="binding site" evidence="6">
    <location>
        <position position="429"/>
    </location>
    <ligand>
        <name>Mg(2+)</name>
        <dbReference type="ChEBI" id="CHEBI:18420"/>
    </ligand>
</feature>
<feature type="binding site" evidence="3">
    <location>
        <position position="700"/>
    </location>
    <ligand>
        <name>ATP</name>
        <dbReference type="ChEBI" id="CHEBI:30616"/>
    </ligand>
</feature>
<feature type="binding site" evidence="6">
    <location>
        <position position="742"/>
    </location>
    <ligand>
        <name>ATP</name>
        <dbReference type="ChEBI" id="CHEBI:30616"/>
    </ligand>
</feature>
<feature type="binding site" evidence="3">
    <location>
        <position position="766"/>
    </location>
    <ligand>
        <name>ATP</name>
        <dbReference type="ChEBI" id="CHEBI:30616"/>
    </ligand>
</feature>
<feature type="binding site" evidence="3">
    <location>
        <position position="809"/>
    </location>
    <ligand>
        <name>ATP</name>
        <dbReference type="ChEBI" id="CHEBI:30616"/>
    </ligand>
</feature>
<feature type="binding site" evidence="3">
    <location>
        <position position="889"/>
    </location>
    <ligand>
        <name>ATP</name>
        <dbReference type="ChEBI" id="CHEBI:30616"/>
    </ligand>
</feature>
<feature type="binding site" evidence="3">
    <location>
        <position position="890"/>
    </location>
    <ligand>
        <name>ATP</name>
        <dbReference type="ChEBI" id="CHEBI:30616"/>
    </ligand>
</feature>
<feature type="binding site" evidence="3">
    <location>
        <position position="891"/>
    </location>
    <ligand>
        <name>ATP</name>
        <dbReference type="ChEBI" id="CHEBI:30616"/>
    </ligand>
</feature>
<feature type="binding site" evidence="3">
    <location>
        <position position="1005"/>
    </location>
    <ligand>
        <name>ATP</name>
        <dbReference type="ChEBI" id="CHEBI:30616"/>
    </ligand>
</feature>
<feature type="binding site" evidence="3">
    <location>
        <position position="1011"/>
    </location>
    <ligand>
        <name>ATP</name>
        <dbReference type="ChEBI" id="CHEBI:30616"/>
    </ligand>
</feature>
<feature type="binding site" evidence="4">
    <location>
        <position position="1031"/>
    </location>
    <ligand>
        <name>Mg(2+)</name>
        <dbReference type="ChEBI" id="CHEBI:18420"/>
    </ligand>
</feature>
<feature type="binding site" evidence="6">
    <location>
        <position position="1034"/>
    </location>
    <ligand>
        <name>ATP</name>
        <dbReference type="ChEBI" id="CHEBI:30616"/>
    </ligand>
</feature>
<feature type="binding site" evidence="6">
    <location>
        <position position="1035"/>
    </location>
    <ligand>
        <name>ATP</name>
        <dbReference type="ChEBI" id="CHEBI:30616"/>
    </ligand>
</feature>
<feature type="binding site" evidence="4">
    <location>
        <position position="1035"/>
    </location>
    <ligand>
        <name>Mg(2+)</name>
        <dbReference type="ChEBI" id="CHEBI:18420"/>
    </ligand>
</feature>
<feature type="modified residue" description="Phosphoserine" evidence="1">
    <location>
        <position position="466"/>
    </location>
</feature>
<feature type="splice variant" id="VSP_056604" description="In isoform 2." evidence="14">
    <original>REEKKY</original>
    <variation>SRSHLK</variation>
    <location>
        <begin position="150"/>
        <end position="155"/>
    </location>
</feature>
<feature type="splice variant" id="VSP_056605" description="In isoform 2." evidence="14">
    <location>
        <begin position="156"/>
        <end position="1499"/>
    </location>
</feature>
<feature type="sequence variant" id="VAR_078700" description="Found in a patient with autism and Parkinson's disease; uncertain significance; dbSNP:rs763246380." evidence="11">
    <original>R</original>
    <variation>W</variation>
    <location>
        <position position="208"/>
    </location>
</feature>
<feature type="sequence variant" id="VAR_048380" description="In dbSNP:rs17116056.">
    <original>S</original>
    <variation>Y</variation>
    <location>
        <position position="353"/>
    </location>
</feature>
<feature type="sequence variant" id="VAR_061038" description="In dbSNP:rs56724944.">
    <original>R</original>
    <variation>H</variation>
    <location>
        <position position="504"/>
    </location>
</feature>
<feature type="sequence variant" id="VAR_022004" description="In dbSNP:rs2066703.">
    <original>T</original>
    <variation>M</variation>
    <location>
        <position position="532"/>
    </location>
</feature>
<feature type="sequence variant" id="VAR_022005" description="In dbSNP:rs2066704.">
    <original>A</original>
    <variation>T</variation>
    <location>
        <position position="784"/>
    </location>
</feature>
<feature type="sequence variant" id="VAR_048381" description="In dbSNP:rs17555920.">
    <original>E</original>
    <variation>K</variation>
    <location>
        <position position="834"/>
    </location>
</feature>
<feature type="sequence variant" id="VAR_022006" description="In dbSNP:rs2076742.">
    <original>W</original>
    <variation>C</variation>
    <location>
        <position position="1172"/>
    </location>
</feature>
<feature type="sequence variant" id="VAR_022007" description="In dbSNP:rs2076744.">
    <original>A</original>
    <variation>T</variation>
    <location>
        <position position="1179"/>
    </location>
</feature>
<feature type="sequence variant" id="VAR_022008" description="In dbSNP:rs2076745.">
    <original>I</original>
    <variation>V</variation>
    <location>
        <position position="1188"/>
    </location>
</feature>
<feature type="sequence variant" id="VAR_048382" description="In dbSNP:rs2076746.">
    <original>V</original>
    <variation>M</variation>
    <location>
        <position position="1198"/>
    </location>
</feature>
<feature type="sequence variant" id="VAR_022009" description="In dbSNP:rs3816800.">
    <original>R</original>
    <variation>S</variation>
    <location>
        <position position="1298"/>
    </location>
</feature>
<feature type="sequence variant" id="VAR_048383" description="In dbSNP:rs9324127.">
    <original>A</original>
    <variation>V</variation>
    <location>
        <position position="1397"/>
    </location>
</feature>
<feature type="mutagenesis site" description="Decreases PC-flipping activity." evidence="13">
    <original>NF</original>
    <variation>QA</variation>
    <location>
        <begin position="98"/>
        <end position="99"/>
    </location>
</feature>
<feature type="mutagenesis site" description="Impairs PC-flipping activity." evidence="10 12 13">
    <original>E</original>
    <variation>Q</variation>
    <location>
        <position position="203"/>
    </location>
</feature>
<feature type="sequence conflict" description="In Ref. 5; BAA25492." evidence="16" ref="5">
    <original>Q</original>
    <variation>R</variation>
    <location>
        <position position="388"/>
    </location>
</feature>
<keyword id="KW-0025">Alternative splicing</keyword>
<keyword id="KW-0067">ATP-binding</keyword>
<keyword id="KW-1003">Cell membrane</keyword>
<keyword id="KW-0256">Endoplasmic reticulum</keyword>
<keyword id="KW-0445">Lipid transport</keyword>
<keyword id="KW-0460">Magnesium</keyword>
<keyword id="KW-0472">Membrane</keyword>
<keyword id="KW-0479">Metal-binding</keyword>
<keyword id="KW-0547">Nucleotide-binding</keyword>
<keyword id="KW-0597">Phosphoprotein</keyword>
<keyword id="KW-1267">Proteomics identification</keyword>
<keyword id="KW-1185">Reference proteome</keyword>
<keyword id="KW-1278">Translocase</keyword>
<keyword id="KW-0812">Transmembrane</keyword>
<keyword id="KW-1133">Transmembrane helix</keyword>
<keyword id="KW-0813">Transport</keyword>
<comment type="function">
    <text evidence="10 12 13">Catalytic component of P4-ATPase flippase complex, which catalyzes the hydrolysis of ATP coupled to the transport of phosphatidylcholine (PC) from the outer to the inner leaflet of the plasma membrane (PubMed:25947375, PubMed:29599178, PubMed:30530492). Initiates inward plasma membrane bending and recruitment of Bin/amphiphysin/Rvs (BAR) domain-containing proteins involved in membrane tubulation and cell trafficking (PubMed:29599178). Facilitates ITGB1/beta1 integrin endocytosis, delaying cell adhesion and cell spreading on extracellular matrix (PubMed:25947375, PubMed:29599178). Has low flippase activity toward glucosylceramide (GlcCer) (PubMed:30530492).</text>
</comment>
<comment type="catalytic activity">
    <reaction evidence="10 12 13">
        <text>ATP + H2O + phospholipidSide 1 = ADP + phosphate + phospholipidSide 2.</text>
        <dbReference type="EC" id="7.6.2.1"/>
    </reaction>
</comment>
<comment type="catalytic activity">
    <reaction evidence="10 12 13">
        <text>a 1,2-diacyl-sn-glycero-3-phosphocholine(out) + ATP + H2O = a 1,2-diacyl-sn-glycero-3-phosphocholine(in) + ADP + phosphate + H(+)</text>
        <dbReference type="Rhea" id="RHEA:38583"/>
        <dbReference type="ChEBI" id="CHEBI:15377"/>
        <dbReference type="ChEBI" id="CHEBI:15378"/>
        <dbReference type="ChEBI" id="CHEBI:30616"/>
        <dbReference type="ChEBI" id="CHEBI:43474"/>
        <dbReference type="ChEBI" id="CHEBI:57643"/>
        <dbReference type="ChEBI" id="CHEBI:456216"/>
    </reaction>
    <physiologicalReaction direction="left-to-right" evidence="17 18 19">
        <dbReference type="Rhea" id="RHEA:38584"/>
    </physiologicalReaction>
</comment>
<comment type="catalytic activity">
    <reaction evidence="13">
        <text>a beta-D-glucosyl-(1&lt;-&gt;1')-N-acylsphing-4-enine(out) + ATP + H2O = a beta-D-glucosyl-(1&lt;-&gt;1')-N-acylsphing-4-enine(in) + ADP + phosphate + H(+)</text>
        <dbReference type="Rhea" id="RHEA:66036"/>
        <dbReference type="ChEBI" id="CHEBI:15377"/>
        <dbReference type="ChEBI" id="CHEBI:15378"/>
        <dbReference type="ChEBI" id="CHEBI:22801"/>
        <dbReference type="ChEBI" id="CHEBI:30616"/>
        <dbReference type="ChEBI" id="CHEBI:43474"/>
        <dbReference type="ChEBI" id="CHEBI:456216"/>
    </reaction>
    <physiologicalReaction direction="left-to-right" evidence="19">
        <dbReference type="Rhea" id="RHEA:66037"/>
    </physiologicalReaction>
</comment>
<comment type="cofactor">
    <cofactor evidence="6">
        <name>Mg(2+)</name>
        <dbReference type="ChEBI" id="CHEBI:18420"/>
    </cofactor>
</comment>
<comment type="activity regulation">
    <text evidence="12">Inhibited under hypotonic conditions.</text>
</comment>
<comment type="subunit">
    <text evidence="10">Component of a P4-ATPase flippase complex which consists of a catalytic alpha subunit ATP10A and an accessory beta subunit TMEM30A.</text>
</comment>
<comment type="interaction">
    <interactant intactId="EBI-26444318">
        <id>O60312</id>
    </interactant>
    <interactant intactId="EBI-2836942">
        <id>Q9NV96</id>
        <label>TMEM30A</label>
    </interactant>
    <organismsDiffer>false</organismsDiffer>
    <experiments>3</experiments>
</comment>
<comment type="subcellular location">
    <subcellularLocation>
        <location evidence="9 10 13">Cell membrane</location>
        <topology evidence="9">Multi-pass membrane protein</topology>
    </subcellularLocation>
    <subcellularLocation>
        <location evidence="9 10">Endoplasmic reticulum membrane</location>
    </subcellularLocation>
    <text>Exit from the endoplasmic reticulum requires the presence of TMEM30A, but not that of TMEM30B.</text>
</comment>
<comment type="alternative products">
    <event type="alternative splicing"/>
    <isoform>
        <id>O60312-1</id>
        <name>1</name>
        <sequence type="displayed"/>
    </isoform>
    <isoform>
        <id>O60312-2</id>
        <name>2</name>
        <sequence type="described" ref="VSP_056604 VSP_056605"/>
    </isoform>
</comment>
<comment type="tissue specificity">
    <text>Widely expressed, with highest levels in kidney, followed by lung, brain, prostate, testis, ovary and small intestine.</text>
</comment>
<comment type="PTM">
    <text evidence="2">Autophosphorylated at the conserved aspartate of the P-type ATPase signature sequence.</text>
</comment>
<comment type="similarity">
    <text evidence="16">Belongs to the cation transport ATPase (P-type) (TC 3.A.3) family. Type IV subfamily.</text>
</comment>
<evidence type="ECO:0000250" key="1">
    <source>
        <dbReference type="UniProtKB" id="O54827"/>
    </source>
</evidence>
<evidence type="ECO:0000250" key="2">
    <source>
        <dbReference type="UniProtKB" id="O94823"/>
    </source>
</evidence>
<evidence type="ECO:0000250" key="3">
    <source>
        <dbReference type="UniProtKB" id="P04191"/>
    </source>
</evidence>
<evidence type="ECO:0000250" key="4">
    <source>
        <dbReference type="UniProtKB" id="Q8NB49"/>
    </source>
</evidence>
<evidence type="ECO:0000250" key="5">
    <source>
        <dbReference type="UniProtKB" id="Q9HD20"/>
    </source>
</evidence>
<evidence type="ECO:0000250" key="6">
    <source>
        <dbReference type="UniProtKB" id="Q9Y2Q0"/>
    </source>
</evidence>
<evidence type="ECO:0000255" key="7"/>
<evidence type="ECO:0000256" key="8">
    <source>
        <dbReference type="SAM" id="MobiDB-lite"/>
    </source>
</evidence>
<evidence type="ECO:0000269" key="9">
    <source>
    </source>
</evidence>
<evidence type="ECO:0000269" key="10">
    <source>
    </source>
</evidence>
<evidence type="ECO:0000269" key="11">
    <source>
    </source>
</evidence>
<evidence type="ECO:0000269" key="12">
    <source>
    </source>
</evidence>
<evidence type="ECO:0000269" key="13">
    <source>
    </source>
</evidence>
<evidence type="ECO:0000303" key="14">
    <source>
    </source>
</evidence>
<evidence type="ECO:0000303" key="15">
    <source>
    </source>
</evidence>
<evidence type="ECO:0000305" key="16"/>
<evidence type="ECO:0000305" key="17">
    <source>
    </source>
</evidence>
<evidence type="ECO:0000305" key="18">
    <source>
    </source>
</evidence>
<evidence type="ECO:0000305" key="19">
    <source>
    </source>
</evidence>
<reference key="1">
    <citation type="journal article" date="2001" name="Nat. Genet.">
        <title>A novel maternally expressed gene, ATP10C, encodes a putative aminophospholipid translocase associated with Angelman syndrome.</title>
        <authorList>
            <person name="Meguro M."/>
            <person name="Kashiwagi A."/>
            <person name="Mitsuya K."/>
            <person name="Nakao M."/>
            <person name="Kondo I."/>
            <person name="Saitoh S."/>
            <person name="Oshimura M."/>
        </authorList>
    </citation>
    <scope>NUCLEOTIDE SEQUENCE [MRNA] (ISOFORM 1)</scope>
</reference>
<reference key="2">
    <citation type="journal article" date="2001" name="Am. J. Hum. Genet.">
        <title>The human aminophospholipid-transporting ATPase gene ATP10C maps adjacent to UBE3A and exhibits similar imprinted expression.</title>
        <authorList>
            <person name="Herzing L.B.K."/>
            <person name="Kim S.-J."/>
            <person name="Cook E.H. Jr."/>
            <person name="Ledbetter D.H."/>
        </authorList>
    </citation>
    <scope>NUCLEOTIDE SEQUENCE [GENOMIC DNA]</scope>
</reference>
<reference key="3">
    <citation type="journal article" date="2006" name="Nature">
        <title>Analysis of the DNA sequence and duplication history of human chromosome 15.</title>
        <authorList>
            <person name="Zody M.C."/>
            <person name="Garber M."/>
            <person name="Sharpe T."/>
            <person name="Young S.K."/>
            <person name="Rowen L."/>
            <person name="O'Neill K."/>
            <person name="Whittaker C.A."/>
            <person name="Kamal M."/>
            <person name="Chang J.L."/>
            <person name="Cuomo C.A."/>
            <person name="Dewar K."/>
            <person name="FitzGerald M.G."/>
            <person name="Kodira C.D."/>
            <person name="Madan A."/>
            <person name="Qin S."/>
            <person name="Yang X."/>
            <person name="Abbasi N."/>
            <person name="Abouelleil A."/>
            <person name="Arachchi H.M."/>
            <person name="Baradarani L."/>
            <person name="Birditt B."/>
            <person name="Bloom S."/>
            <person name="Bloom T."/>
            <person name="Borowsky M.L."/>
            <person name="Burke J."/>
            <person name="Butler J."/>
            <person name="Cook A."/>
            <person name="DeArellano K."/>
            <person name="DeCaprio D."/>
            <person name="Dorris L. III"/>
            <person name="Dors M."/>
            <person name="Eichler E.E."/>
            <person name="Engels R."/>
            <person name="Fahey J."/>
            <person name="Fleetwood P."/>
            <person name="Friedman C."/>
            <person name="Gearin G."/>
            <person name="Hall J.L."/>
            <person name="Hensley G."/>
            <person name="Johnson E."/>
            <person name="Jones C."/>
            <person name="Kamat A."/>
            <person name="Kaur A."/>
            <person name="Locke D.P."/>
            <person name="Madan A."/>
            <person name="Munson G."/>
            <person name="Jaffe D.B."/>
            <person name="Lui A."/>
            <person name="Macdonald P."/>
            <person name="Mauceli E."/>
            <person name="Naylor J.W."/>
            <person name="Nesbitt R."/>
            <person name="Nicol R."/>
            <person name="O'Leary S.B."/>
            <person name="Ratcliffe A."/>
            <person name="Rounsley S."/>
            <person name="She X."/>
            <person name="Sneddon K.M.B."/>
            <person name="Stewart S."/>
            <person name="Sougnez C."/>
            <person name="Stone S.M."/>
            <person name="Topham K."/>
            <person name="Vincent D."/>
            <person name="Wang S."/>
            <person name="Zimmer A.R."/>
            <person name="Birren B.W."/>
            <person name="Hood L."/>
            <person name="Lander E.S."/>
            <person name="Nusbaum C."/>
        </authorList>
    </citation>
    <scope>NUCLEOTIDE SEQUENCE [LARGE SCALE GENOMIC DNA]</scope>
</reference>
<reference key="4">
    <citation type="journal article" date="2004" name="Genome Res.">
        <title>The status, quality, and expansion of the NIH full-length cDNA project: the Mammalian Gene Collection (MGC).</title>
        <authorList>
            <consortium name="The MGC Project Team"/>
        </authorList>
    </citation>
    <scope>NUCLEOTIDE SEQUENCE [LARGE SCALE MRNA] (ISOFORMS 1 AND 2)</scope>
    <source>
        <tissue>Skin</tissue>
        <tissue>Testis</tissue>
    </source>
</reference>
<reference key="5">
    <citation type="journal article" date="1998" name="DNA Res.">
        <title>Prediction of the coding sequences of unidentified human genes. IX. The complete sequences of 100 new cDNA clones from brain which can code for large proteins in vitro.</title>
        <authorList>
            <person name="Nagase T."/>
            <person name="Ishikawa K."/>
            <person name="Miyajima N."/>
            <person name="Tanaka A."/>
            <person name="Kotani H."/>
            <person name="Nomura N."/>
            <person name="Ohara O."/>
        </authorList>
    </citation>
    <scope>NUCLEOTIDE SEQUENCE [LARGE SCALE MRNA] OF 337-1499 (ISOFORM 1)</scope>
    <source>
        <tissue>Brain</tissue>
    </source>
</reference>
<reference key="6">
    <citation type="journal article" date="2011" name="J. Biol. Chem.">
        <title>ATP9B, a P4-ATPase (a putative aminophospholipid translocase), localizes to the trans-Golgi network in a CDC50 protein-independent manner.</title>
        <authorList>
            <person name="Takatsu H."/>
            <person name="Baba K."/>
            <person name="Shima T."/>
            <person name="Umino H."/>
            <person name="Kato U."/>
            <person name="Umeda M."/>
            <person name="Nakayama K."/>
            <person name="Shin H.W."/>
        </authorList>
    </citation>
    <scope>SUBCELLULAR LOCATION</scope>
</reference>
<reference key="7">
    <citation type="journal article" date="2015" name="J. Biol. Chem.">
        <title>Phospholipid Flippase ATP10A Translocates Phosphatidylcholine and Is Involved in Plasma Membrane Dynamics.</title>
        <authorList>
            <person name="Naito T."/>
            <person name="Takatsu H."/>
            <person name="Miyano R."/>
            <person name="Takada N."/>
            <person name="Nakayama K."/>
            <person name="Shin H.W."/>
        </authorList>
    </citation>
    <scope>FUNCTION</scope>
    <scope>CATALYTIC ACTIVITY</scope>
    <scope>SUBCELLULAR LOCATION</scope>
    <scope>INTERACTION WITH TMEM30A</scope>
    <scope>MUTAGENESIS OF GLU-203</scope>
</reference>
<reference key="8">
    <citation type="journal article" date="2015" name="Neuron">
        <title>Targeted DNA Sequencing from Autism Spectrum Disorder Brains Implicates Multiple Genetic Mechanisms.</title>
        <authorList>
            <person name="D'Gama A.M."/>
            <person name="Pochareddy S."/>
            <person name="Li M."/>
            <person name="Jamuar S.S."/>
            <person name="Reiff R.E."/>
            <person name="Lam A.T."/>
            <person name="Sestan N."/>
            <person name="Walsh C.A."/>
        </authorList>
    </citation>
    <scope>VARIANT TRP-208</scope>
</reference>
<reference key="9">
    <citation type="journal article" date="2018" name="EMBO J.">
        <title>Phospholipid-flipping activity of P4-ATPase drives membrane curvature.</title>
        <authorList>
            <person name="Takada N."/>
            <person name="Naito T."/>
            <person name="Inoue T."/>
            <person name="Nakayama K."/>
            <person name="Takatsu H."/>
            <person name="Shin H.W."/>
        </authorList>
    </citation>
    <scope>FUNCTION</scope>
    <scope>CATALYTIC ACTIVITY</scope>
    <scope>ACTIVITY REGULATION</scope>
    <scope>MUTAGENESIS OF GLU-203</scope>
</reference>
<reference key="10">
    <citation type="journal article" date="2019" name="J. Biol. Chem.">
        <title>Yeast and human P4-ATPases transport glycosphingolipids using conserved structural motifs.</title>
        <authorList>
            <person name="Roland B.P."/>
            <person name="Naito T."/>
            <person name="Best J.T."/>
            <person name="Arnaiz-Yepez C."/>
            <person name="Takatsu H."/>
            <person name="Yu R.J."/>
            <person name="Shin H.W."/>
            <person name="Graham T.R."/>
        </authorList>
    </citation>
    <scope>FUNCTION</scope>
    <scope>CATALYTIC ACTIVITY</scope>
    <scope>SUBCELLULAR LOCATION</scope>
    <scope>MUTAGENESIS OF 98-ASN-PHE-99 AND GLU-203</scope>
</reference>
<proteinExistence type="evidence at protein level"/>
<gene>
    <name evidence="15" type="primary">ATP10A</name>
    <name type="synonym">ATP10C</name>
    <name type="synonym">ATPVA</name>
    <name type="synonym">ATPVC</name>
    <name type="synonym">KIAA0566</name>
</gene>
<name>AT10A_HUMAN</name>
<organism>
    <name type="scientific">Homo sapiens</name>
    <name type="common">Human</name>
    <dbReference type="NCBI Taxonomy" id="9606"/>
    <lineage>
        <taxon>Eukaryota</taxon>
        <taxon>Metazoa</taxon>
        <taxon>Chordata</taxon>
        <taxon>Craniata</taxon>
        <taxon>Vertebrata</taxon>
        <taxon>Euteleostomi</taxon>
        <taxon>Mammalia</taxon>
        <taxon>Eutheria</taxon>
        <taxon>Euarchontoglires</taxon>
        <taxon>Primates</taxon>
        <taxon>Haplorrhini</taxon>
        <taxon>Catarrhini</taxon>
        <taxon>Hominidae</taxon>
        <taxon>Homo</taxon>
    </lineage>
</organism>
<protein>
    <recommendedName>
        <fullName>Phospholipid-transporting ATPase VA</fullName>
        <ecNumber evidence="10 12">7.6.2.1</ecNumber>
    </recommendedName>
    <alternativeName>
        <fullName>ATPase class V type 10A</fullName>
    </alternativeName>
    <alternativeName>
        <fullName>Aminophospholipid translocase VA</fullName>
    </alternativeName>
    <alternativeName>
        <fullName>P4-ATPase flippase complex alpha subunit ATP10A</fullName>
    </alternativeName>
</protein>